<sequence length="308" mass="32055">MNPIVVVHGGGAGPISKDRKERVHQGMVRAATVGYGILREGGSAVDAVEGAVVALEDDPEFNAGCGSVLNTNGEVEMDASIMDGKDLSAGAVSAVQCIANPIKLARLVMEKTPHCFLTDQGAAQFAAAMGVPEIPGEKLVTERNKKRLEKEKHEKGAQKTDCQKNLGTVGAVALDCKGNVAYATSTGGIVNKMVGRVGDSPCLGAGGYADNDIGAVSTTGHGESILKVNLARLTLFHIEQGKTVEEAADLSLGYMKSRVKGLGGLIVVSKTGDWVAKWTSTSMPWAAAKDGKLHFGIDPDDTTITDLP</sequence>
<gene>
    <name type="primary">ASRGL1</name>
    <name type="synonym">ALP</name>
    <name type="synonym">CRASH</name>
</gene>
<reference key="1">
    <citation type="journal article" date="2002" name="Mol. Reprod. Dev.">
        <title>A novel asparaginase-like protein is a sperm autoantigen in rats.</title>
        <authorList>
            <person name="Bush L.A."/>
            <person name="Herr J.C."/>
            <person name="Wolkowicz M."/>
            <person name="Sherman N.E."/>
            <person name="Shore A."/>
            <person name="Flickinger C.J."/>
        </authorList>
    </citation>
    <scope>NUCLEOTIDE SEQUENCE [MRNA] (ISOFORM 1)</scope>
    <scope>TISSUE SPECIFICITY</scope>
    <scope>SUBCELLULAR LOCATION</scope>
    <source>
        <tissue>Testis</tissue>
    </source>
</reference>
<reference key="2">
    <citation type="journal article" date="2004" name="Int. J. Oncol.">
        <title>Identification of CRASH, a gene deregulated in gynecological tumors.</title>
        <authorList>
            <person name="Evtimova V."/>
            <person name="Zeillinger R."/>
            <person name="Kaul S."/>
            <person name="Weidle U.H."/>
        </authorList>
    </citation>
    <scope>NUCLEOTIDE SEQUENCE [MRNA] (ISOFORM 1)</scope>
    <scope>TISSUE SPECIFICITY</scope>
    <scope>INDUCTION</scope>
</reference>
<reference key="3">
    <citation type="journal article" date="2004" name="Nat. Genet.">
        <title>Complete sequencing and characterization of 21,243 full-length human cDNAs.</title>
        <authorList>
            <person name="Ota T."/>
            <person name="Suzuki Y."/>
            <person name="Nishikawa T."/>
            <person name="Otsuki T."/>
            <person name="Sugiyama T."/>
            <person name="Irie R."/>
            <person name="Wakamatsu A."/>
            <person name="Hayashi K."/>
            <person name="Sato H."/>
            <person name="Nagai K."/>
            <person name="Kimura K."/>
            <person name="Makita H."/>
            <person name="Sekine M."/>
            <person name="Obayashi M."/>
            <person name="Nishi T."/>
            <person name="Shibahara T."/>
            <person name="Tanaka T."/>
            <person name="Ishii S."/>
            <person name="Yamamoto J."/>
            <person name="Saito K."/>
            <person name="Kawai Y."/>
            <person name="Isono Y."/>
            <person name="Nakamura Y."/>
            <person name="Nagahari K."/>
            <person name="Murakami K."/>
            <person name="Yasuda T."/>
            <person name="Iwayanagi T."/>
            <person name="Wagatsuma M."/>
            <person name="Shiratori A."/>
            <person name="Sudo H."/>
            <person name="Hosoiri T."/>
            <person name="Kaku Y."/>
            <person name="Kodaira H."/>
            <person name="Kondo H."/>
            <person name="Sugawara M."/>
            <person name="Takahashi M."/>
            <person name="Kanda K."/>
            <person name="Yokoi T."/>
            <person name="Furuya T."/>
            <person name="Kikkawa E."/>
            <person name="Omura Y."/>
            <person name="Abe K."/>
            <person name="Kamihara K."/>
            <person name="Katsuta N."/>
            <person name="Sato K."/>
            <person name="Tanikawa M."/>
            <person name="Yamazaki M."/>
            <person name="Ninomiya K."/>
            <person name="Ishibashi T."/>
            <person name="Yamashita H."/>
            <person name="Murakawa K."/>
            <person name="Fujimori K."/>
            <person name="Tanai H."/>
            <person name="Kimata M."/>
            <person name="Watanabe M."/>
            <person name="Hiraoka S."/>
            <person name="Chiba Y."/>
            <person name="Ishida S."/>
            <person name="Ono Y."/>
            <person name="Takiguchi S."/>
            <person name="Watanabe S."/>
            <person name="Yosida M."/>
            <person name="Hotuta T."/>
            <person name="Kusano J."/>
            <person name="Kanehori K."/>
            <person name="Takahashi-Fujii A."/>
            <person name="Hara H."/>
            <person name="Tanase T.-O."/>
            <person name="Nomura Y."/>
            <person name="Togiya S."/>
            <person name="Komai F."/>
            <person name="Hara R."/>
            <person name="Takeuchi K."/>
            <person name="Arita M."/>
            <person name="Imose N."/>
            <person name="Musashino K."/>
            <person name="Yuuki H."/>
            <person name="Oshima A."/>
            <person name="Sasaki N."/>
            <person name="Aotsuka S."/>
            <person name="Yoshikawa Y."/>
            <person name="Matsunawa H."/>
            <person name="Ichihara T."/>
            <person name="Shiohata N."/>
            <person name="Sano S."/>
            <person name="Moriya S."/>
            <person name="Momiyama H."/>
            <person name="Satoh N."/>
            <person name="Takami S."/>
            <person name="Terashima Y."/>
            <person name="Suzuki O."/>
            <person name="Nakagawa S."/>
            <person name="Senoh A."/>
            <person name="Mizoguchi H."/>
            <person name="Goto Y."/>
            <person name="Shimizu F."/>
            <person name="Wakebe H."/>
            <person name="Hishigaki H."/>
            <person name="Watanabe T."/>
            <person name="Sugiyama A."/>
            <person name="Takemoto M."/>
            <person name="Kawakami B."/>
            <person name="Yamazaki M."/>
            <person name="Watanabe K."/>
            <person name="Kumagai A."/>
            <person name="Itakura S."/>
            <person name="Fukuzumi Y."/>
            <person name="Fujimori Y."/>
            <person name="Komiyama M."/>
            <person name="Tashiro H."/>
            <person name="Tanigami A."/>
            <person name="Fujiwara T."/>
            <person name="Ono T."/>
            <person name="Yamada K."/>
            <person name="Fujii Y."/>
            <person name="Ozaki K."/>
            <person name="Hirao M."/>
            <person name="Ohmori Y."/>
            <person name="Kawabata A."/>
            <person name="Hikiji T."/>
            <person name="Kobatake N."/>
            <person name="Inagaki H."/>
            <person name="Ikema Y."/>
            <person name="Okamoto S."/>
            <person name="Okitani R."/>
            <person name="Kawakami T."/>
            <person name="Noguchi S."/>
            <person name="Itoh T."/>
            <person name="Shigeta K."/>
            <person name="Senba T."/>
            <person name="Matsumura K."/>
            <person name="Nakajima Y."/>
            <person name="Mizuno T."/>
            <person name="Morinaga M."/>
            <person name="Sasaki M."/>
            <person name="Togashi T."/>
            <person name="Oyama M."/>
            <person name="Hata H."/>
            <person name="Watanabe M."/>
            <person name="Komatsu T."/>
            <person name="Mizushima-Sugano J."/>
            <person name="Satoh T."/>
            <person name="Shirai Y."/>
            <person name="Takahashi Y."/>
            <person name="Nakagawa K."/>
            <person name="Okumura K."/>
            <person name="Nagase T."/>
            <person name="Nomura N."/>
            <person name="Kikuchi H."/>
            <person name="Masuho Y."/>
            <person name="Yamashita R."/>
            <person name="Nakai K."/>
            <person name="Yada T."/>
            <person name="Nakamura Y."/>
            <person name="Ohara O."/>
            <person name="Isogai T."/>
            <person name="Sugano S."/>
        </authorList>
    </citation>
    <scope>NUCLEOTIDE SEQUENCE [LARGE SCALE MRNA] (ISOFORM 1)</scope>
    <source>
        <tissue>Corpus callosum</tissue>
    </source>
</reference>
<reference key="4">
    <citation type="submission" date="2005-09" db="EMBL/GenBank/DDBJ databases">
        <authorList>
            <person name="Mural R.J."/>
            <person name="Istrail S."/>
            <person name="Sutton G.G."/>
            <person name="Florea L."/>
            <person name="Halpern A.L."/>
            <person name="Mobarry C.M."/>
            <person name="Lippert R."/>
            <person name="Walenz B."/>
            <person name="Shatkay H."/>
            <person name="Dew I."/>
            <person name="Miller J.R."/>
            <person name="Flanigan M.J."/>
            <person name="Edwards N.J."/>
            <person name="Bolanos R."/>
            <person name="Fasulo D."/>
            <person name="Halldorsson B.V."/>
            <person name="Hannenhalli S."/>
            <person name="Turner R."/>
            <person name="Yooseph S."/>
            <person name="Lu F."/>
            <person name="Nusskern D.R."/>
            <person name="Shue B.C."/>
            <person name="Zheng X.H."/>
            <person name="Zhong F."/>
            <person name="Delcher A.L."/>
            <person name="Huson D.H."/>
            <person name="Kravitz S.A."/>
            <person name="Mouchard L."/>
            <person name="Reinert K."/>
            <person name="Remington K.A."/>
            <person name="Clark A.G."/>
            <person name="Waterman M.S."/>
            <person name="Eichler E.E."/>
            <person name="Adams M.D."/>
            <person name="Hunkapiller M.W."/>
            <person name="Myers E.W."/>
            <person name="Venter J.C."/>
        </authorList>
    </citation>
    <scope>NUCLEOTIDE SEQUENCE [LARGE SCALE GENOMIC DNA]</scope>
</reference>
<reference key="5">
    <citation type="journal article" date="2004" name="Genome Res.">
        <title>The status, quality, and expansion of the NIH full-length cDNA project: the Mammalian Gene Collection (MGC).</title>
        <authorList>
            <consortium name="The MGC Project Team"/>
        </authorList>
    </citation>
    <scope>NUCLEOTIDE SEQUENCE [LARGE SCALE MRNA] (ISOFORMS 1 AND 2)</scope>
    <source>
        <tissue>Eye</tissue>
        <tissue>Lung</tissue>
        <tissue>Skin</tissue>
    </source>
</reference>
<reference key="6">
    <citation type="journal article" date="2009" name="Anal. Chem.">
        <title>Lys-N and trypsin cover complementary parts of the phosphoproteome in a refined SCX-based approach.</title>
        <authorList>
            <person name="Gauci S."/>
            <person name="Helbig A.O."/>
            <person name="Slijper M."/>
            <person name="Krijgsveld J."/>
            <person name="Heck A.J."/>
            <person name="Mohammed S."/>
        </authorList>
    </citation>
    <scope>ACETYLATION [LARGE SCALE ANALYSIS] AT MET-1</scope>
    <scope>IDENTIFICATION BY MASS SPECTROMETRY [LARGE SCALE ANALYSIS]</scope>
</reference>
<reference key="7">
    <citation type="journal article" date="2009" name="Biochemistry">
        <title>The human asparaginase-like protein 1 hASRGL1 is an Ntn hydrolase with beta-aspartyl peptidase activity.</title>
        <authorList>
            <person name="Cantor J.R."/>
            <person name="Stone E.M."/>
            <person name="Chantranupong L."/>
            <person name="Georgiou G."/>
        </authorList>
    </citation>
    <scope>CATALYTIC ACTIVITY</scope>
    <scope>FUNCTION</scope>
    <scope>BIOPHYSICOCHEMICAL PROPERTIES</scope>
    <scope>ACTIVE SITE</scope>
    <scope>MUTAGENESIS OF THR-168</scope>
    <scope>IDENTIFICATION BY MASS SPECTROMETRY</scope>
    <scope>AUTOCATALYTIC CLEAVAGE</scope>
</reference>
<reference key="8">
    <citation type="journal article" date="2016" name="Hum. Mol. Genet.">
        <title>A missense mutation in ASRGL1 is involved in causing autosomal recessive retinal degeneration.</title>
        <authorList>
            <person name="Biswas P."/>
            <person name="Chavali V.R."/>
            <person name="Agnello G."/>
            <person name="Stone E."/>
            <person name="Chakarova C."/>
            <person name="Duncan J.L."/>
            <person name="Kannabiran C."/>
            <person name="Homsher M."/>
            <person name="Bhattacharya S.S."/>
            <person name="Naeem M.A."/>
            <person name="Kimchi A."/>
            <person name="Sharon D."/>
            <person name="Iwata T."/>
            <person name="Riazuddin S."/>
            <person name="Reddy G.B."/>
            <person name="Hejtmancik J.F."/>
            <person name="Georgiou G."/>
            <person name="Riazuddin S.A."/>
            <person name="Ayyagari R."/>
        </authorList>
    </citation>
    <scope>SUBCELLULAR LOCATION</scope>
    <scope>BIOPHYSICOCHEMICAL PROPERTIES</scope>
    <scope>VARIANT ARG-178</scope>
    <scope>CHARACTERIZATION OF VARIANT ARG-178</scope>
    <scope>CATALYTIC ACTIVITY</scope>
    <scope>FUNCTION</scope>
</reference>
<reference key="9">
    <citation type="journal article" date="2012" name="Biochemistry">
        <title>Structures of apo and product-bound human L-asparaginase: insights into the mechanism of autoproteolysis and substrate hydrolysis.</title>
        <authorList>
            <person name="Nomme J."/>
            <person name="Su Y."/>
            <person name="Konrad M."/>
            <person name="Lavie A."/>
        </authorList>
    </citation>
    <scope>X-RAY CRYSTALLOGRAPHY (1.75 ANGSTROMS) IN COMPLEXES WITH ASPARTATE</scope>
    <scope>ACTIVE SITE</scope>
    <scope>SUBUNIT</scope>
    <scope>ACTIVITY REGULATION</scope>
    <scope>AUTOCATALYTIC CLEAVAGE</scope>
</reference>
<reference key="10">
    <citation type="journal article" date="2012" name="ACS Chem. Biol.">
        <title>Uncoupling intramolecular processing and substrate hydrolysis in the N-terminal nucleophile hydrolase hASRGL1 by circular permutation.</title>
        <authorList>
            <person name="Li W."/>
            <person name="Cantor J.R."/>
            <person name="Yogesha S.D."/>
            <person name="Yang S."/>
            <person name="Chantranupong L."/>
            <person name="Liu J.Q."/>
            <person name="Agnello G."/>
            <person name="Georgiou G."/>
            <person name="Stone E.M."/>
            <person name="Zhang Y."/>
        </authorList>
    </citation>
    <scope>X-RAY CRYSTALLOGRAPHY (2.3 ANGSTROMS)</scope>
    <scope>CATALYTIC ACTIVITY</scope>
    <scope>MUTAGENESIS OF THR-168</scope>
    <scope>SUBUNIT</scope>
</reference>
<dbReference type="EC" id="3.4.19.5" evidence="3"/>
<dbReference type="EC" id="3.5.1.1" evidence="3 5 6"/>
<dbReference type="EMBL" id="AF411076">
    <property type="protein sequence ID" value="AAM28434.1"/>
    <property type="molecule type" value="mRNA"/>
</dbReference>
<dbReference type="EMBL" id="AK025969">
    <property type="protein sequence ID" value="BAB15302.1"/>
    <property type="status" value="ALT_INIT"/>
    <property type="molecule type" value="mRNA"/>
</dbReference>
<dbReference type="EMBL" id="AK091894">
    <property type="protein sequence ID" value="BAG52437.1"/>
    <property type="molecule type" value="mRNA"/>
</dbReference>
<dbReference type="EMBL" id="AK313069">
    <property type="protein sequence ID" value="BAG35897.1"/>
    <property type="molecule type" value="mRNA"/>
</dbReference>
<dbReference type="EMBL" id="CH471076">
    <property type="protein sequence ID" value="EAW74012.1"/>
    <property type="molecule type" value="Genomic_DNA"/>
</dbReference>
<dbReference type="EMBL" id="BC021295">
    <property type="protein sequence ID" value="AAH21295.3"/>
    <property type="molecule type" value="mRNA"/>
</dbReference>
<dbReference type="EMBL" id="BC064963">
    <property type="protein sequence ID" value="AAH64963.1"/>
    <property type="molecule type" value="mRNA"/>
</dbReference>
<dbReference type="EMBL" id="BC093070">
    <property type="protein sequence ID" value="AAH93070.1"/>
    <property type="molecule type" value="mRNA"/>
</dbReference>
<dbReference type="CCDS" id="CCDS8019.1">
    <molecule id="Q7L266-1"/>
</dbReference>
<dbReference type="RefSeq" id="NP_001077395.1">
    <molecule id="Q7L266-1"/>
    <property type="nucleotide sequence ID" value="NM_001083926.2"/>
</dbReference>
<dbReference type="RefSeq" id="NP_079356.3">
    <molecule id="Q7L266-1"/>
    <property type="nucleotide sequence ID" value="NM_025080.3"/>
</dbReference>
<dbReference type="RefSeq" id="XP_005274362.1">
    <property type="nucleotide sequence ID" value="XM_005274305.3"/>
</dbReference>
<dbReference type="RefSeq" id="XP_005274363.1">
    <property type="nucleotide sequence ID" value="XM_005274306.2"/>
</dbReference>
<dbReference type="PDB" id="3TKJ">
    <property type="method" value="X-ray"/>
    <property type="resolution" value="2.30 A"/>
    <property type="chains" value="A/B=2-308"/>
</dbReference>
<dbReference type="PDB" id="4ET0">
    <property type="method" value="X-ray"/>
    <property type="resolution" value="3.30 A"/>
    <property type="chains" value="A/B=2-308"/>
</dbReference>
<dbReference type="PDB" id="4O0C">
    <property type="method" value="X-ray"/>
    <property type="resolution" value="1.50 A"/>
    <property type="chains" value="A/B=1-308"/>
</dbReference>
<dbReference type="PDB" id="4O0D">
    <property type="method" value="X-ray"/>
    <property type="resolution" value="1.95 A"/>
    <property type="chains" value="A/B=1-308"/>
</dbReference>
<dbReference type="PDB" id="4O0E">
    <property type="method" value="X-ray"/>
    <property type="resolution" value="1.71 A"/>
    <property type="chains" value="A/B=1-308"/>
</dbReference>
<dbReference type="PDB" id="4O0F">
    <property type="method" value="X-ray"/>
    <property type="resolution" value="1.92 A"/>
    <property type="chains" value="A/B=1-308"/>
</dbReference>
<dbReference type="PDB" id="4O0G">
    <property type="method" value="X-ray"/>
    <property type="resolution" value="2.10 A"/>
    <property type="chains" value="A/B=1-308"/>
</dbReference>
<dbReference type="PDB" id="4O0H">
    <property type="method" value="X-ray"/>
    <property type="resolution" value="1.97 A"/>
    <property type="chains" value="A/B=1-308"/>
</dbReference>
<dbReference type="PDB" id="4OSX">
    <property type="method" value="X-ray"/>
    <property type="resolution" value="1.95 A"/>
    <property type="chains" value="A/B=1-308"/>
</dbReference>
<dbReference type="PDB" id="4OSY">
    <property type="method" value="X-ray"/>
    <property type="resolution" value="1.91 A"/>
    <property type="chains" value="A/B=1-308"/>
</dbReference>
<dbReference type="PDB" id="4PVP">
    <property type="method" value="X-ray"/>
    <property type="resolution" value="1.85 A"/>
    <property type="chains" value="A/B=1-308"/>
</dbReference>
<dbReference type="PDB" id="4PVQ">
    <property type="method" value="X-ray"/>
    <property type="resolution" value="2.13 A"/>
    <property type="chains" value="A/B=1-308"/>
</dbReference>
<dbReference type="PDB" id="4PVR">
    <property type="method" value="X-ray"/>
    <property type="resolution" value="1.75 A"/>
    <property type="chains" value="A/B=1-308"/>
</dbReference>
<dbReference type="PDB" id="4PVS">
    <property type="method" value="X-ray"/>
    <property type="resolution" value="1.84 A"/>
    <property type="chains" value="A/B=1-308"/>
</dbReference>
<dbReference type="PDB" id="4ZM9">
    <property type="method" value="X-ray"/>
    <property type="resolution" value="2.51 A"/>
    <property type="chains" value="A/B/C/D=2-308"/>
</dbReference>
<dbReference type="PDBsum" id="3TKJ"/>
<dbReference type="PDBsum" id="4ET0"/>
<dbReference type="PDBsum" id="4O0C"/>
<dbReference type="PDBsum" id="4O0D"/>
<dbReference type="PDBsum" id="4O0E"/>
<dbReference type="PDBsum" id="4O0F"/>
<dbReference type="PDBsum" id="4O0G"/>
<dbReference type="PDBsum" id="4O0H"/>
<dbReference type="PDBsum" id="4OSX"/>
<dbReference type="PDBsum" id="4OSY"/>
<dbReference type="PDBsum" id="4PVP"/>
<dbReference type="PDBsum" id="4PVQ"/>
<dbReference type="PDBsum" id="4PVR"/>
<dbReference type="PDBsum" id="4PVS"/>
<dbReference type="PDBsum" id="4ZM9"/>
<dbReference type="SMR" id="Q7L266"/>
<dbReference type="BioGRID" id="123142">
    <property type="interactions" value="26"/>
</dbReference>
<dbReference type="FunCoup" id="Q7L266">
    <property type="interactions" value="605"/>
</dbReference>
<dbReference type="IntAct" id="Q7L266">
    <property type="interactions" value="13"/>
</dbReference>
<dbReference type="MINT" id="Q7L266"/>
<dbReference type="STRING" id="9606.ENSP00000400057"/>
<dbReference type="DrugBank" id="DB00174">
    <property type="generic name" value="Asparagine"/>
</dbReference>
<dbReference type="DrugBank" id="DB00128">
    <property type="generic name" value="Aspartic acid"/>
</dbReference>
<dbReference type="MEROPS" id="T02.002"/>
<dbReference type="iPTMnet" id="Q7L266"/>
<dbReference type="PhosphoSitePlus" id="Q7L266"/>
<dbReference type="BioMuta" id="ASRGL1"/>
<dbReference type="DMDM" id="158706477"/>
<dbReference type="jPOST" id="Q7L266"/>
<dbReference type="MassIVE" id="Q7L266"/>
<dbReference type="PaxDb" id="9606-ENSP00000400057"/>
<dbReference type="PeptideAtlas" id="Q7L266"/>
<dbReference type="ProteomicsDB" id="68755">
    <molecule id="Q7L266-1"/>
</dbReference>
<dbReference type="ProteomicsDB" id="68756">
    <molecule id="Q7L266-2"/>
</dbReference>
<dbReference type="Pumba" id="Q7L266"/>
<dbReference type="Antibodypedia" id="14797">
    <property type="antibodies" value="285 antibodies from 32 providers"/>
</dbReference>
<dbReference type="DNASU" id="80150"/>
<dbReference type="Ensembl" id="ENST00000301776.9">
    <molecule id="Q7L266-1"/>
    <property type="protein sequence ID" value="ENSP00000301776.5"/>
    <property type="gene ID" value="ENSG00000162174.12"/>
</dbReference>
<dbReference type="Ensembl" id="ENST00000415229.6">
    <molecule id="Q7L266-1"/>
    <property type="protein sequence ID" value="ENSP00000400057.2"/>
    <property type="gene ID" value="ENSG00000162174.12"/>
</dbReference>
<dbReference type="GeneID" id="80150"/>
<dbReference type="KEGG" id="hsa:80150"/>
<dbReference type="MANE-Select" id="ENST00000415229.6">
    <property type="protein sequence ID" value="ENSP00000400057.2"/>
    <property type="RefSeq nucleotide sequence ID" value="NM_001083926.2"/>
    <property type="RefSeq protein sequence ID" value="NP_001077395.1"/>
</dbReference>
<dbReference type="UCSC" id="uc001nte.5">
    <molecule id="Q7L266-1"/>
    <property type="organism name" value="human"/>
</dbReference>
<dbReference type="AGR" id="HGNC:16448"/>
<dbReference type="CTD" id="80150"/>
<dbReference type="DisGeNET" id="80150"/>
<dbReference type="GeneCards" id="ASRGL1"/>
<dbReference type="HGNC" id="HGNC:16448">
    <property type="gene designation" value="ASRGL1"/>
</dbReference>
<dbReference type="HPA" id="ENSG00000162174">
    <property type="expression patterns" value="Tissue enhanced (brain, cervix, testis)"/>
</dbReference>
<dbReference type="MalaCards" id="ASRGL1"/>
<dbReference type="MIM" id="609212">
    <property type="type" value="gene"/>
</dbReference>
<dbReference type="neXtProt" id="NX_Q7L266"/>
<dbReference type="OpenTargets" id="ENSG00000162174"/>
<dbReference type="PharmGKB" id="PA25059"/>
<dbReference type="VEuPathDB" id="HostDB:ENSG00000162174"/>
<dbReference type="eggNOG" id="KOG1592">
    <property type="taxonomic scope" value="Eukaryota"/>
</dbReference>
<dbReference type="GeneTree" id="ENSGT00950000183045"/>
<dbReference type="HOGENOM" id="CLU_021603_1_2_1"/>
<dbReference type="InParanoid" id="Q7L266"/>
<dbReference type="OMA" id="MGIIMVD"/>
<dbReference type="OrthoDB" id="2262349at2759"/>
<dbReference type="PAN-GO" id="Q7L266">
    <property type="GO annotations" value="4 GO annotations based on evolutionary models"/>
</dbReference>
<dbReference type="PhylomeDB" id="Q7L266"/>
<dbReference type="TreeFam" id="TF323960"/>
<dbReference type="BioCyc" id="MetaCyc:HS08648-MONOMER"/>
<dbReference type="BRENDA" id="3.4.19.5">
    <property type="organism ID" value="2681"/>
</dbReference>
<dbReference type="BRENDA" id="3.5.1.1">
    <property type="organism ID" value="2681"/>
</dbReference>
<dbReference type="PathwayCommons" id="Q7L266"/>
<dbReference type="Reactome" id="R-HSA-8964208">
    <property type="pathway name" value="Phenylalanine metabolism"/>
</dbReference>
<dbReference type="SignaLink" id="Q7L266"/>
<dbReference type="BioGRID-ORCS" id="80150">
    <property type="hits" value="21 hits in 1167 CRISPR screens"/>
</dbReference>
<dbReference type="ChiTaRS" id="ASRGL1">
    <property type="organism name" value="human"/>
</dbReference>
<dbReference type="EvolutionaryTrace" id="Q7L266"/>
<dbReference type="GeneWiki" id="ASRGL1"/>
<dbReference type="GenomeRNAi" id="80150"/>
<dbReference type="Pharos" id="Q7L266">
    <property type="development level" value="Tbio"/>
</dbReference>
<dbReference type="PRO" id="PR:Q7L266"/>
<dbReference type="Proteomes" id="UP000005640">
    <property type="component" value="Chromosome 11"/>
</dbReference>
<dbReference type="RNAct" id="Q7L266">
    <property type="molecule type" value="protein"/>
</dbReference>
<dbReference type="Bgee" id="ENSG00000162174">
    <property type="expression patterns" value="Expressed in sperm and 168 other cell types or tissues"/>
</dbReference>
<dbReference type="ExpressionAtlas" id="Q7L266">
    <property type="expression patterns" value="baseline and differential"/>
</dbReference>
<dbReference type="GO" id="GO:0005737">
    <property type="term" value="C:cytoplasm"/>
    <property type="evidence" value="ECO:0000314"/>
    <property type="project" value="UniProtKB"/>
</dbReference>
<dbReference type="GO" id="GO:0005829">
    <property type="term" value="C:cytosol"/>
    <property type="evidence" value="ECO:0000304"/>
    <property type="project" value="Reactome"/>
</dbReference>
<dbReference type="GO" id="GO:0005634">
    <property type="term" value="C:nucleus"/>
    <property type="evidence" value="ECO:0007005"/>
    <property type="project" value="UniProtKB"/>
</dbReference>
<dbReference type="GO" id="GO:0001917">
    <property type="term" value="C:photoreceptor inner segment"/>
    <property type="evidence" value="ECO:0000250"/>
    <property type="project" value="UniProtKB"/>
</dbReference>
<dbReference type="GO" id="GO:0004067">
    <property type="term" value="F:asparaginase activity"/>
    <property type="evidence" value="ECO:0000314"/>
    <property type="project" value="UniProtKB"/>
</dbReference>
<dbReference type="GO" id="GO:0008798">
    <property type="term" value="F:beta-aspartyl-peptidase activity"/>
    <property type="evidence" value="ECO:0000314"/>
    <property type="project" value="UniProtKB"/>
</dbReference>
<dbReference type="GO" id="GO:0033345">
    <property type="term" value="P:asparagine catabolic process via L-aspartate"/>
    <property type="evidence" value="ECO:0000314"/>
    <property type="project" value="UniProtKB"/>
</dbReference>
<dbReference type="GO" id="GO:0006508">
    <property type="term" value="P:proteolysis"/>
    <property type="evidence" value="ECO:0007669"/>
    <property type="project" value="UniProtKB-KW"/>
</dbReference>
<dbReference type="CDD" id="cd04702">
    <property type="entry name" value="ASRGL1_like"/>
    <property type="match status" value="1"/>
</dbReference>
<dbReference type="FunFam" id="3.60.20.30:FF:000001">
    <property type="entry name" value="Isoaspartyl peptidase/L-asparaginase"/>
    <property type="match status" value="1"/>
</dbReference>
<dbReference type="Gene3D" id="3.60.20.30">
    <property type="entry name" value="(Glycosyl)asparaginase"/>
    <property type="match status" value="1"/>
</dbReference>
<dbReference type="InterPro" id="IPR033844">
    <property type="entry name" value="ASRGL1_meta"/>
</dbReference>
<dbReference type="InterPro" id="IPR029055">
    <property type="entry name" value="Ntn_hydrolases_N"/>
</dbReference>
<dbReference type="InterPro" id="IPR000246">
    <property type="entry name" value="Peptidase_T2"/>
</dbReference>
<dbReference type="PANTHER" id="PTHR10188:SF41">
    <property type="entry name" value="ISOASPARTYL PEPTIDASE_L-ASPARAGINASE"/>
    <property type="match status" value="1"/>
</dbReference>
<dbReference type="PANTHER" id="PTHR10188">
    <property type="entry name" value="L-ASPARAGINASE"/>
    <property type="match status" value="1"/>
</dbReference>
<dbReference type="Pfam" id="PF01112">
    <property type="entry name" value="Asparaginase_2"/>
    <property type="match status" value="1"/>
</dbReference>
<dbReference type="SUPFAM" id="SSF56235">
    <property type="entry name" value="N-terminal nucleophile aminohydrolases (Ntn hydrolases)"/>
    <property type="match status" value="1"/>
</dbReference>
<name>ASGL1_HUMAN</name>
<keyword id="KW-0002">3D-structure</keyword>
<keyword id="KW-0007">Acetylation</keyword>
<keyword id="KW-0025">Alternative splicing</keyword>
<keyword id="KW-0068">Autocatalytic cleavage</keyword>
<keyword id="KW-0963">Cytoplasm</keyword>
<keyword id="KW-0378">Hydrolase</keyword>
<keyword id="KW-0645">Protease</keyword>
<keyword id="KW-1267">Proteomics identification</keyword>
<keyword id="KW-1185">Reference proteome</keyword>
<protein>
    <recommendedName>
        <fullName>Isoaspartyl peptidase/L-asparaginase</fullName>
        <ecNumber evidence="3">3.4.19.5</ecNumber>
        <ecNumber evidence="3 5 6">3.5.1.1</ecNumber>
    </recommendedName>
    <alternativeName>
        <fullName evidence="8">Asparaginase-like protein 1</fullName>
    </alternativeName>
    <alternativeName>
        <fullName evidence="8">Beta-aspartyl-peptidase</fullName>
    </alternativeName>
    <alternativeName>
        <fullName>Isoaspartyl dipeptidase</fullName>
    </alternativeName>
    <alternativeName>
        <fullName>L-asparagine amidohydrolase</fullName>
    </alternativeName>
    <component>
        <recommendedName>
            <fullName>Isoaspartyl peptidase/L-asparaginase alpha chain</fullName>
        </recommendedName>
    </component>
    <component>
        <recommendedName>
            <fullName>Isoaspartyl peptidase/L-asparaginase beta chain</fullName>
        </recommendedName>
    </component>
</protein>
<comment type="function">
    <text evidence="3 6">Has both L-asparaginase and beta-aspartyl peptidase activity. May be involved in the production of L-aspartate, which can act as an excitatory neurotransmitter in some brain regions. Is highly active with L-Asp beta-methyl ester. Besides, has catalytic activity toward beta-aspartyl dipeptides and their methyl esters, including beta-L-Asp-L-Phe, beta-L-Asp-L-Phe methyl ester (aspartame), beta-L-Asp-L-Ala, beta-L-Asp-L-Leu and beta-L-Asp-L-Lys. Does not have aspartylglucosaminidase activity and is inactive toward GlcNAc-L-Asn. Likewise, has no activity toward glutamine.</text>
</comment>
<comment type="catalytic activity">
    <reaction evidence="3 5 6">
        <text>L-asparagine + H2O = L-aspartate + NH4(+)</text>
        <dbReference type="Rhea" id="RHEA:21016"/>
        <dbReference type="ChEBI" id="CHEBI:15377"/>
        <dbReference type="ChEBI" id="CHEBI:28938"/>
        <dbReference type="ChEBI" id="CHEBI:29991"/>
        <dbReference type="ChEBI" id="CHEBI:58048"/>
        <dbReference type="EC" id="3.5.1.1"/>
    </reaction>
</comment>
<comment type="catalytic activity">
    <reaction evidence="3">
        <text>Cleavage of a beta-linked Asp residue from the N-terminus of a polypeptide.</text>
        <dbReference type="EC" id="3.4.19.5"/>
    </reaction>
</comment>
<comment type="activity regulation">
    <text evidence="4">Glycine accelerates autocleavage into an alpha and beta chain.</text>
</comment>
<comment type="biophysicochemical properties">
    <kinetics>
        <KM evidence="3">3.4 mM for L-asparagine (L-Asn)</KM>
        <KM evidence="3">0.4 mM for L-aspartic acid beta-methyl ester</KM>
        <KM evidence="3">0.4 mM for L-Asp-L-Phe</KM>
        <KM evidence="3">1 mM for L-Asp-L-Ala</KM>
        <KM evidence="6">0.1 mM for L-aspartic acid beta-hydroxamate</KM>
    </kinetics>
</comment>
<comment type="subunit">
    <text evidence="4 5">Heterodimer of an alpha and beta chain produced by autocleavage. This heterodimer may then dimerize in turn, giving rise to a heterotetramer.</text>
</comment>
<comment type="subcellular location">
    <subcellularLocation>
        <location evidence="1 6">Cytoplasm</location>
    </subcellularLocation>
    <text>Midpiece of sperm tail.</text>
</comment>
<comment type="alternative products">
    <event type="alternative splicing"/>
    <isoform>
        <id>Q7L266-1</id>
        <name>1</name>
        <sequence type="displayed"/>
    </isoform>
    <isoform>
        <id>Q7L266-2</id>
        <name>2</name>
        <sequence type="described" ref="VSP_028287"/>
    </isoform>
</comment>
<comment type="tissue specificity">
    <text evidence="1 2">Expressed in brain, kidney, testis and tissues of the gastrointestinal tract. Present in sperm (at protein level). Over-expressed in uterine, mammary, prostatic and ovarian carcinoma.</text>
</comment>
<comment type="induction">
    <text evidence="2">By 5-alpha-di-hydrotestosterone and progesterone.</text>
</comment>
<comment type="PTM">
    <text evidence="3 4">Cleaved into an alpha and beta chain by autocatalysis; this activates the enzyme. The N-terminal residue of the beta subunit is responsible for the nucleophile hydrolase activity.</text>
</comment>
<comment type="similarity">
    <text evidence="9">Belongs to the Ntn-hydrolase family.</text>
</comment>
<comment type="sequence caution" evidence="9">
    <conflict type="erroneous initiation">
        <sequence resource="EMBL-CDS" id="BAB15302"/>
    </conflict>
    <text>Truncated N-terminus.</text>
</comment>
<comment type="sequence caution" evidence="9">
    <conflict type="miscellaneous discrepancy">
        <sequence resource="EMBL-CDS" id="BAB15302"/>
    </conflict>
    <text>Contaminating sequence.</text>
</comment>
<proteinExistence type="evidence at protein level"/>
<evidence type="ECO:0000269" key="1">
    <source>
    </source>
</evidence>
<evidence type="ECO:0000269" key="2">
    <source>
    </source>
</evidence>
<evidence type="ECO:0000269" key="3">
    <source>
    </source>
</evidence>
<evidence type="ECO:0000269" key="4">
    <source>
    </source>
</evidence>
<evidence type="ECO:0000269" key="5">
    <source>
    </source>
</evidence>
<evidence type="ECO:0000269" key="6">
    <source>
    </source>
</evidence>
<evidence type="ECO:0000303" key="7">
    <source>
    </source>
</evidence>
<evidence type="ECO:0000303" key="8">
    <source>
    </source>
</evidence>
<evidence type="ECO:0000305" key="9"/>
<evidence type="ECO:0007744" key="10">
    <source>
    </source>
</evidence>
<evidence type="ECO:0007829" key="11">
    <source>
        <dbReference type="PDB" id="4O0C"/>
    </source>
</evidence>
<evidence type="ECO:0007829" key="12">
    <source>
        <dbReference type="PDB" id="4O0H"/>
    </source>
</evidence>
<organism>
    <name type="scientific">Homo sapiens</name>
    <name type="common">Human</name>
    <dbReference type="NCBI Taxonomy" id="9606"/>
    <lineage>
        <taxon>Eukaryota</taxon>
        <taxon>Metazoa</taxon>
        <taxon>Chordata</taxon>
        <taxon>Craniata</taxon>
        <taxon>Vertebrata</taxon>
        <taxon>Euteleostomi</taxon>
        <taxon>Mammalia</taxon>
        <taxon>Eutheria</taxon>
        <taxon>Euarchontoglires</taxon>
        <taxon>Primates</taxon>
        <taxon>Haplorrhini</taxon>
        <taxon>Catarrhini</taxon>
        <taxon>Hominidae</taxon>
        <taxon>Homo</taxon>
    </lineage>
</organism>
<accession>Q7L266</accession>
<accession>B2R7Q0</accession>
<accession>Q567Q4</accession>
<accession>Q6P1P0</accession>
<accession>Q8NI34</accession>
<accession>Q9H6F7</accession>
<feature type="chain" id="PRO_0000305204" description="Isoaspartyl peptidase/L-asparaginase alpha chain">
    <location>
        <begin position="1"/>
        <end position="167"/>
    </location>
</feature>
<feature type="chain" id="PRO_0000420556" description="Isoaspartyl peptidase/L-asparaginase beta chain">
    <location>
        <begin position="168"/>
        <end position="308"/>
    </location>
</feature>
<feature type="active site" description="Nucleophile" evidence="3 4">
    <location>
        <position position="168"/>
    </location>
</feature>
<feature type="binding site">
    <location>
        <begin position="196"/>
        <end position="199"/>
    </location>
    <ligand>
        <name>substrate</name>
    </ligand>
</feature>
<feature type="binding site">
    <location>
        <begin position="219"/>
        <end position="222"/>
    </location>
    <ligand>
        <name>substrate</name>
    </ligand>
</feature>
<feature type="modified residue" description="N-acetylmethionine" evidence="10">
    <location>
        <position position="1"/>
    </location>
</feature>
<feature type="splice variant" id="VSP_028287" description="In isoform 2." evidence="7">
    <location>
        <begin position="1"/>
        <end position="128"/>
    </location>
</feature>
<feature type="sequence variant" id="VAR_081118" description="Found in a large family with early-onset recessive retinal degeneration; abolishes autocleavage resulting in loss of enzymatic activity; increased protein aggregation; changes protein localization that becomes perinuclear, does not change ligand affinity for L-aspartic acid beta-hydroxamate." evidence="6">
    <original>G</original>
    <variation>R</variation>
    <location>
        <position position="178"/>
    </location>
</feature>
<feature type="mutagenesis site" description="Abolishes activation by autocleavage. Abolishes enzyme activity." evidence="3 5">
    <original>T</original>
    <variation>A</variation>
    <variation>C</variation>
    <location>
        <position position="168"/>
    </location>
</feature>
<feature type="mutagenesis site" description="Strongly reduced enzyme activity." evidence="3 5">
    <original>T</original>
    <variation>S</variation>
    <location>
        <position position="168"/>
    </location>
</feature>
<feature type="sequence conflict" description="In Ref. 1; AAM28434." evidence="9" ref="1">
    <original>A</original>
    <variation>T</variation>
    <location>
        <position position="181"/>
    </location>
</feature>
<feature type="strand" evidence="11">
    <location>
        <begin position="4"/>
        <end position="8"/>
    </location>
</feature>
<feature type="helix" evidence="11">
    <location>
        <begin position="17"/>
        <end position="38"/>
    </location>
</feature>
<feature type="turn" evidence="11">
    <location>
        <begin position="39"/>
        <end position="41"/>
    </location>
</feature>
<feature type="helix" evidence="11">
    <location>
        <begin position="44"/>
        <end position="57"/>
    </location>
</feature>
<feature type="strand" evidence="11">
    <location>
        <begin position="61"/>
        <end position="64"/>
    </location>
</feature>
<feature type="strand" evidence="12">
    <location>
        <begin position="71"/>
        <end position="73"/>
    </location>
</feature>
<feature type="strand" evidence="11">
    <location>
        <begin position="77"/>
        <end position="83"/>
    </location>
</feature>
<feature type="turn" evidence="11">
    <location>
        <begin position="84"/>
        <end position="86"/>
    </location>
</feature>
<feature type="strand" evidence="11">
    <location>
        <begin position="89"/>
        <end position="95"/>
    </location>
</feature>
<feature type="helix" evidence="11">
    <location>
        <begin position="101"/>
        <end position="111"/>
    </location>
</feature>
<feature type="strand" evidence="11">
    <location>
        <begin position="115"/>
        <end position="118"/>
    </location>
</feature>
<feature type="helix" evidence="11">
    <location>
        <begin position="119"/>
        <end position="128"/>
    </location>
</feature>
<feature type="helix" evidence="11">
    <location>
        <begin position="136"/>
        <end position="138"/>
    </location>
</feature>
<feature type="helix" evidence="11">
    <location>
        <begin position="142"/>
        <end position="152"/>
    </location>
</feature>
<feature type="strand" evidence="11">
    <location>
        <begin position="169"/>
        <end position="174"/>
    </location>
</feature>
<feature type="strand" evidence="11">
    <location>
        <begin position="180"/>
        <end position="186"/>
    </location>
</feature>
<feature type="turn" evidence="11">
    <location>
        <begin position="203"/>
        <end position="205"/>
    </location>
</feature>
<feature type="strand" evidence="11">
    <location>
        <begin position="206"/>
        <end position="210"/>
    </location>
</feature>
<feature type="turn" evidence="11">
    <location>
        <begin position="211"/>
        <end position="213"/>
    </location>
</feature>
<feature type="strand" evidence="11">
    <location>
        <begin position="214"/>
        <end position="220"/>
    </location>
</feature>
<feature type="helix" evidence="11">
    <location>
        <begin position="222"/>
        <end position="228"/>
    </location>
</feature>
<feature type="helix" evidence="11">
    <location>
        <begin position="230"/>
        <end position="239"/>
    </location>
</feature>
<feature type="helix" evidence="11">
    <location>
        <begin position="244"/>
        <end position="259"/>
    </location>
</feature>
<feature type="strand" evidence="11">
    <location>
        <begin position="263"/>
        <end position="269"/>
    </location>
</feature>
<feature type="strand" evidence="11">
    <location>
        <begin position="274"/>
        <end position="282"/>
    </location>
</feature>
<feature type="strand" evidence="11">
    <location>
        <begin position="285"/>
        <end position="289"/>
    </location>
</feature>
<feature type="strand" evidence="11">
    <location>
        <begin position="292"/>
        <end position="298"/>
    </location>
</feature>
<feature type="strand" evidence="11">
    <location>
        <begin position="303"/>
        <end position="306"/>
    </location>
</feature>